<feature type="chain" id="PRO_0000356239" description="CAAX prenyl protease 2">
    <location>
        <begin position="1"/>
        <end position="311"/>
    </location>
</feature>
<feature type="transmembrane region" description="Helical" evidence="2">
    <location>
        <begin position="14"/>
        <end position="34"/>
    </location>
</feature>
<feature type="transmembrane region" description="Helical" evidence="2">
    <location>
        <begin position="51"/>
        <end position="71"/>
    </location>
</feature>
<feature type="transmembrane region" description="Helical" evidence="2">
    <location>
        <begin position="94"/>
        <end position="114"/>
    </location>
</feature>
<feature type="transmembrane region" description="Helical" evidence="2">
    <location>
        <begin position="173"/>
        <end position="193"/>
    </location>
</feature>
<feature type="transmembrane region" description="Helical" evidence="2">
    <location>
        <begin position="219"/>
        <end position="239"/>
    </location>
</feature>
<feature type="transmembrane region" description="Helical" evidence="2">
    <location>
        <begin position="244"/>
        <end position="264"/>
    </location>
</feature>
<feature type="transmembrane region" description="Helical" evidence="2">
    <location>
        <begin position="268"/>
        <end position="288"/>
    </location>
</feature>
<feature type="active site" description="Proton donor/acceptor" evidence="1">
    <location>
        <position position="164"/>
    </location>
</feature>
<feature type="active site" description="Proton donor/acceptor" evidence="1">
    <location>
        <position position="198"/>
    </location>
</feature>
<feature type="site" description="Transition state stabilizer" evidence="1">
    <location>
        <position position="251"/>
    </location>
</feature>
<feature type="site" description="Transition state stabilizer" evidence="1">
    <location>
        <position position="255"/>
    </location>
</feature>
<feature type="sequence conflict" description="In Ref. 4; AAO63367 and 5; BAC43705." evidence="6" ref="4 5">
    <original>Y</original>
    <variation>C</variation>
    <location>
        <position position="256"/>
    </location>
</feature>
<sequence>MATDGESISMSLAVATCVAMALFYVLILYVPTVILRLPSASSYTEFMIRRFICAAICTVASLVFTAFILPIKSWEASYILGVYGIRKDHLWQGVVYPLLLTSLVYAGSLVLKLFTLLESWKENGGGCSSFNYIRSFFQTIPASVLTSASNVSVWRNFIVAPVTEELVFRSCMIPLLLCAGFRINTAIFLCPVLFSLAHLNHFREMYIRHNRSYLRASLIVGLQLGYTVIFGAYASFLFIRTGHLAAPLFAHIFCNYMGLPVLYANGKGLVSAAFLGGVVGFVLLLFPLTKPLMYNDSTNDCPCWLGYCLWN</sequence>
<reference key="1">
    <citation type="journal article" date="2003" name="J. Biol. Chem.">
        <title>AtFACE-2, a functional prenylated protein protease from Arabidopsis thaliana related to mammalian Ras-converting enzymes.</title>
        <authorList>
            <person name="Cadinanos J."/>
            <person name="Varela I."/>
            <person name="Mandel D.A."/>
            <person name="Schmidt W.K."/>
            <person name="Diaz-Perales A."/>
            <person name="Lopez-Otin C."/>
            <person name="Freije J.M."/>
        </authorList>
    </citation>
    <scope>NUCLEOTIDE SEQUENCE [MRNA]</scope>
    <scope>FUNCTION</scope>
    <scope>CATALYTIC ACTIVITY</scope>
    <scope>TISSUE SPECIFICITY</scope>
    <scope>ACTIVITY REGULATION</scope>
</reference>
<reference key="2">
    <citation type="journal article" date="1999" name="Nature">
        <title>Sequence and analysis of chromosome 2 of the plant Arabidopsis thaliana.</title>
        <authorList>
            <person name="Lin X."/>
            <person name="Kaul S."/>
            <person name="Rounsley S.D."/>
            <person name="Shea T.P."/>
            <person name="Benito M.-I."/>
            <person name="Town C.D."/>
            <person name="Fujii C.Y."/>
            <person name="Mason T.M."/>
            <person name="Bowman C.L."/>
            <person name="Barnstead M.E."/>
            <person name="Feldblyum T.V."/>
            <person name="Buell C.R."/>
            <person name="Ketchum K.A."/>
            <person name="Lee J.J."/>
            <person name="Ronning C.M."/>
            <person name="Koo H.L."/>
            <person name="Moffat K.S."/>
            <person name="Cronin L.A."/>
            <person name="Shen M."/>
            <person name="Pai G."/>
            <person name="Van Aken S."/>
            <person name="Umayam L."/>
            <person name="Tallon L.J."/>
            <person name="Gill J.E."/>
            <person name="Adams M.D."/>
            <person name="Carrera A.J."/>
            <person name="Creasy T.H."/>
            <person name="Goodman H.M."/>
            <person name="Somerville C.R."/>
            <person name="Copenhaver G.P."/>
            <person name="Preuss D."/>
            <person name="Nierman W.C."/>
            <person name="White O."/>
            <person name="Eisen J.A."/>
            <person name="Salzberg S.L."/>
            <person name="Fraser C.M."/>
            <person name="Venter J.C."/>
        </authorList>
    </citation>
    <scope>NUCLEOTIDE SEQUENCE [LARGE SCALE GENOMIC DNA]</scope>
    <source>
        <strain>cv. Columbia</strain>
    </source>
</reference>
<reference key="3">
    <citation type="journal article" date="2017" name="Plant J.">
        <title>Araport11: a complete reannotation of the Arabidopsis thaliana reference genome.</title>
        <authorList>
            <person name="Cheng C.Y."/>
            <person name="Krishnakumar V."/>
            <person name="Chan A.P."/>
            <person name="Thibaud-Nissen F."/>
            <person name="Schobel S."/>
            <person name="Town C.D."/>
        </authorList>
    </citation>
    <scope>GENOME REANNOTATION</scope>
    <source>
        <strain>cv. Columbia</strain>
    </source>
</reference>
<reference key="4">
    <citation type="journal article" date="2002" name="Science">
        <title>Functional annotation of a full-length Arabidopsis cDNA collection.</title>
        <authorList>
            <person name="Seki M."/>
            <person name="Narusaka M."/>
            <person name="Kamiya A."/>
            <person name="Ishida J."/>
            <person name="Satou M."/>
            <person name="Sakurai T."/>
            <person name="Nakajima M."/>
            <person name="Enju A."/>
            <person name="Akiyama K."/>
            <person name="Oono Y."/>
            <person name="Muramatsu M."/>
            <person name="Hayashizaki Y."/>
            <person name="Kawai J."/>
            <person name="Carninci P."/>
            <person name="Itoh M."/>
            <person name="Ishii Y."/>
            <person name="Arakawa T."/>
            <person name="Shibata K."/>
            <person name="Shinagawa A."/>
            <person name="Shinozaki K."/>
        </authorList>
    </citation>
    <scope>NUCLEOTIDE SEQUENCE [LARGE SCALE MRNA]</scope>
    <source>
        <strain>cv. Columbia</strain>
    </source>
</reference>
<reference key="5">
    <citation type="journal article" date="2003" name="Science">
        <title>Empirical analysis of transcriptional activity in the Arabidopsis genome.</title>
        <authorList>
            <person name="Yamada K."/>
            <person name="Lim J."/>
            <person name="Dale J.M."/>
            <person name="Chen H."/>
            <person name="Shinn P."/>
            <person name="Palm C.J."/>
            <person name="Southwick A.M."/>
            <person name="Wu H.C."/>
            <person name="Kim C.J."/>
            <person name="Nguyen M."/>
            <person name="Pham P.K."/>
            <person name="Cheuk R.F."/>
            <person name="Karlin-Newmann G."/>
            <person name="Liu S.X."/>
            <person name="Lam B."/>
            <person name="Sakano H."/>
            <person name="Wu T."/>
            <person name="Yu G."/>
            <person name="Miranda M."/>
            <person name="Quach H.L."/>
            <person name="Tripp M."/>
            <person name="Chang C.H."/>
            <person name="Lee J.M."/>
            <person name="Toriumi M.J."/>
            <person name="Chan M.M."/>
            <person name="Tang C.C."/>
            <person name="Onodera C.S."/>
            <person name="Deng J.M."/>
            <person name="Akiyama K."/>
            <person name="Ansari Y."/>
            <person name="Arakawa T."/>
            <person name="Banh J."/>
            <person name="Banno F."/>
            <person name="Bowser L."/>
            <person name="Brooks S.Y."/>
            <person name="Carninci P."/>
            <person name="Chao Q."/>
            <person name="Choy N."/>
            <person name="Enju A."/>
            <person name="Goldsmith A.D."/>
            <person name="Gurjal M."/>
            <person name="Hansen N.F."/>
            <person name="Hayashizaki Y."/>
            <person name="Johnson-Hopson C."/>
            <person name="Hsuan V.W."/>
            <person name="Iida K."/>
            <person name="Karnes M."/>
            <person name="Khan S."/>
            <person name="Koesema E."/>
            <person name="Ishida J."/>
            <person name="Jiang P.X."/>
            <person name="Jones T."/>
            <person name="Kawai J."/>
            <person name="Kamiya A."/>
            <person name="Meyers C."/>
            <person name="Nakajima M."/>
            <person name="Narusaka M."/>
            <person name="Seki M."/>
            <person name="Sakurai T."/>
            <person name="Satou M."/>
            <person name="Tamse R."/>
            <person name="Vaysberg M."/>
            <person name="Wallender E.K."/>
            <person name="Wong C."/>
            <person name="Yamamura Y."/>
            <person name="Yuan S."/>
            <person name="Shinozaki K."/>
            <person name="Davis R.W."/>
            <person name="Theologis A."/>
            <person name="Ecker J.R."/>
        </authorList>
    </citation>
    <scope>NUCLEOTIDE SEQUENCE [LARGE SCALE MRNA]</scope>
    <source>
        <strain>cv. Columbia</strain>
    </source>
</reference>
<reference key="6">
    <citation type="journal article" date="2008" name="Plant Physiol.">
        <title>Functional analysis of Arabidopsis postprenylation CaaX processing enzymes and their function in subcellular protein targeting.</title>
        <authorList>
            <person name="Bracha-Drori K."/>
            <person name="Shichrur K."/>
            <person name="Lubetzky T.C."/>
            <person name="Yalovsky S."/>
        </authorList>
    </citation>
    <scope>FUNCTION</scope>
    <scope>SUBCELLULAR LOCATION</scope>
</reference>
<gene>
    <name type="primary">FACE2</name>
    <name type="synonym">RCE1</name>
    <name type="ordered locus">At2g36305</name>
    <name type="ORF">F2H17</name>
</gene>
<evidence type="ECO:0000250" key="1">
    <source>
        <dbReference type="UniProtKB" id="Q6LZY8"/>
    </source>
</evidence>
<evidence type="ECO:0000255" key="2"/>
<evidence type="ECO:0000269" key="3">
    <source>
    </source>
</evidence>
<evidence type="ECO:0000269" key="4">
    <source>
    </source>
</evidence>
<evidence type="ECO:0000303" key="5">
    <source>
    </source>
</evidence>
<evidence type="ECO:0000305" key="6"/>
<evidence type="ECO:0000305" key="7">
    <source>
    </source>
</evidence>
<protein>
    <recommendedName>
        <fullName>CAAX prenyl protease 2</fullName>
        <ecNumber evidence="3 7">3.4.26.1</ecNumber>
    </recommendedName>
    <alternativeName>
        <fullName>Farnesylated proteins-converting enzyme 2</fullName>
        <shortName evidence="5">AtFACE-2</shortName>
    </alternativeName>
    <alternativeName>
        <fullName>Prenyl protein-specific endoprotease 2</fullName>
    </alternativeName>
    <alternativeName>
        <fullName>Protein RAS-CONVERTING ENZYME 1</fullName>
        <shortName>AtRCE1</shortName>
    </alternativeName>
</protein>
<accession>Q8GW19</accession>
<accession>Q70VU9</accession>
<keyword id="KW-0256">Endoplasmic reticulum</keyword>
<keyword id="KW-0378">Hydrolase</keyword>
<keyword id="KW-0472">Membrane</keyword>
<keyword id="KW-0645">Protease</keyword>
<keyword id="KW-1185">Reference proteome</keyword>
<keyword id="KW-0812">Transmembrane</keyword>
<keyword id="KW-1133">Transmembrane helix</keyword>
<dbReference type="EC" id="3.4.26.1" evidence="3 7"/>
<dbReference type="EMBL" id="AJ534971">
    <property type="protein sequence ID" value="CAD59227.1"/>
    <property type="molecule type" value="mRNA"/>
</dbReference>
<dbReference type="EMBL" id="AC006921">
    <property type="status" value="NOT_ANNOTATED_CDS"/>
    <property type="molecule type" value="Genomic_DNA"/>
</dbReference>
<dbReference type="EMBL" id="CP002685">
    <property type="protein sequence ID" value="AEC09230.1"/>
    <property type="molecule type" value="Genomic_DNA"/>
</dbReference>
<dbReference type="EMBL" id="BT005303">
    <property type="protein sequence ID" value="AAO63367.1"/>
    <property type="molecule type" value="mRNA"/>
</dbReference>
<dbReference type="EMBL" id="AK119135">
    <property type="protein sequence ID" value="BAC43705.1"/>
    <property type="molecule type" value="mRNA"/>
</dbReference>
<dbReference type="RefSeq" id="NP_850262.2">
    <property type="nucleotide sequence ID" value="NM_179931.4"/>
</dbReference>
<dbReference type="BioGRID" id="3547">
    <property type="interactions" value="46"/>
</dbReference>
<dbReference type="FunCoup" id="Q8GW19">
    <property type="interactions" value="3878"/>
</dbReference>
<dbReference type="IntAct" id="Q8GW19">
    <property type="interactions" value="46"/>
</dbReference>
<dbReference type="STRING" id="3702.Q8GW19"/>
<dbReference type="MEROPS" id="G05.002"/>
<dbReference type="TCDB" id="9.B.1.2.5">
    <property type="family name" value="the integral membrane caax protease (caax protease) family"/>
</dbReference>
<dbReference type="PaxDb" id="3702-AT2G36305.1"/>
<dbReference type="ProteomicsDB" id="230633"/>
<dbReference type="EnsemblPlants" id="AT2G36305.1">
    <property type="protein sequence ID" value="AT2G36305.1"/>
    <property type="gene ID" value="AT2G36305"/>
</dbReference>
<dbReference type="GeneID" id="818203"/>
<dbReference type="Gramene" id="AT2G36305.1">
    <property type="protein sequence ID" value="AT2G36305.1"/>
    <property type="gene ID" value="AT2G36305"/>
</dbReference>
<dbReference type="KEGG" id="ath:AT2G36305"/>
<dbReference type="Araport" id="AT2G36305"/>
<dbReference type="TAIR" id="AT2G36305">
    <property type="gene designation" value="FACE2"/>
</dbReference>
<dbReference type="eggNOG" id="KOG4130">
    <property type="taxonomic scope" value="Eukaryota"/>
</dbReference>
<dbReference type="HOGENOM" id="CLU_049909_2_0_1"/>
<dbReference type="InParanoid" id="Q8GW19"/>
<dbReference type="OMA" id="VIFLCPI"/>
<dbReference type="PRO" id="PR:Q8GW19"/>
<dbReference type="Proteomes" id="UP000006548">
    <property type="component" value="Chromosome 2"/>
</dbReference>
<dbReference type="ExpressionAtlas" id="Q8GW19">
    <property type="expression patterns" value="baseline and differential"/>
</dbReference>
<dbReference type="GO" id="GO:0005783">
    <property type="term" value="C:endoplasmic reticulum"/>
    <property type="evidence" value="ECO:0000314"/>
    <property type="project" value="TAIR"/>
</dbReference>
<dbReference type="GO" id="GO:0005789">
    <property type="term" value="C:endoplasmic reticulum membrane"/>
    <property type="evidence" value="ECO:0007669"/>
    <property type="project" value="UniProtKB-SubCell"/>
</dbReference>
<dbReference type="GO" id="GO:0004175">
    <property type="term" value="F:endopeptidase activity"/>
    <property type="evidence" value="ECO:0000314"/>
    <property type="project" value="TAIR"/>
</dbReference>
<dbReference type="GO" id="GO:0004222">
    <property type="term" value="F:metalloendopeptidase activity"/>
    <property type="evidence" value="ECO:0007669"/>
    <property type="project" value="InterPro"/>
</dbReference>
<dbReference type="GO" id="GO:0080120">
    <property type="term" value="P:CAAX-box protein maturation"/>
    <property type="evidence" value="ECO:0000316"/>
    <property type="project" value="TAIR"/>
</dbReference>
<dbReference type="GO" id="GO:0071586">
    <property type="term" value="P:CAAX-box protein processing"/>
    <property type="evidence" value="ECO:0007669"/>
    <property type="project" value="InterPro"/>
</dbReference>
<dbReference type="GO" id="GO:0016485">
    <property type="term" value="P:protein processing"/>
    <property type="evidence" value="ECO:0000314"/>
    <property type="project" value="TAIR"/>
</dbReference>
<dbReference type="InterPro" id="IPR039731">
    <property type="entry name" value="Rce1"/>
</dbReference>
<dbReference type="InterPro" id="IPR003675">
    <property type="entry name" value="Rce1/LyrA-like_dom"/>
</dbReference>
<dbReference type="PANTHER" id="PTHR13046:SF0">
    <property type="entry name" value="CAAX PRENYL PROTEASE 2"/>
    <property type="match status" value="1"/>
</dbReference>
<dbReference type="PANTHER" id="PTHR13046">
    <property type="entry name" value="PROTEASE U48 CAAX PRENYL PROTEASE RCE1"/>
    <property type="match status" value="1"/>
</dbReference>
<dbReference type="Pfam" id="PF02517">
    <property type="entry name" value="Rce1-like"/>
    <property type="match status" value="1"/>
</dbReference>
<organism>
    <name type="scientific">Arabidopsis thaliana</name>
    <name type="common">Mouse-ear cress</name>
    <dbReference type="NCBI Taxonomy" id="3702"/>
    <lineage>
        <taxon>Eukaryota</taxon>
        <taxon>Viridiplantae</taxon>
        <taxon>Streptophyta</taxon>
        <taxon>Embryophyta</taxon>
        <taxon>Tracheophyta</taxon>
        <taxon>Spermatophyta</taxon>
        <taxon>Magnoliopsida</taxon>
        <taxon>eudicotyledons</taxon>
        <taxon>Gunneridae</taxon>
        <taxon>Pentapetalae</taxon>
        <taxon>rosids</taxon>
        <taxon>malvids</taxon>
        <taxon>Brassicales</taxon>
        <taxon>Brassicaceae</taxon>
        <taxon>Camelineae</taxon>
        <taxon>Arabidopsis</taxon>
    </lineage>
</organism>
<proteinExistence type="evidence at protein level"/>
<name>FACE2_ARATH</name>
<comment type="function">
    <text evidence="3 4">Protease involved in the processing of a variety of prenylated proteins containing the C-terminal CAAX motif, where C is a cysteine modified with an isoprenoid lipid, A is an aliphatic amino acid and X is any C-terminal amino acid. Proteolytically removes the C-terminal three residues of farnesylated and geranylated proteins, leaving the prenylated cysteine as the new C-terminus. The substrate specificity is only partially overlapping with that of FACE1. CAAX processing is likely required for subcellular targeting of prenylated proteins to the plasma membrane.</text>
</comment>
<comment type="catalytic activity">
    <reaction evidence="3 7">
        <text>Hydrolyzes the peptide bond -P2-(S-farnesyl or geranylgeranyl)C-P1'-P2'-P3'-COOH where P1' and P2' are amino acids with aliphatic sidechains and P3' is any C-terminal residue.</text>
        <dbReference type="EC" id="3.4.26.1"/>
    </reaction>
</comment>
<comment type="activity regulation">
    <text evidence="3">Inhibited in vitro by L-1-tosylamido-2-phenylethyl chloromethyl ketone (TPCK) and N-ethylmaleimide, but not by EDTA.</text>
</comment>
<comment type="subcellular location">
    <subcellularLocation>
        <location evidence="4">Endoplasmic reticulum membrane</location>
        <topology evidence="4">Multi-pass membrane protein</topology>
    </subcellularLocation>
</comment>
<comment type="tissue specificity">
    <text evidence="3">Expressed in seeds, stems, leaves, flowers and siliques.</text>
</comment>
<comment type="similarity">
    <text evidence="6">Belongs to the peptidase U48 family.</text>
</comment>